<reference key="1">
    <citation type="journal article" date="2008" name="DNA Res.">
        <title>Comparative genome analysis of Lactobacillus reuteri and Lactobacillus fermentum reveal a genomic island for reuterin and cobalamin production.</title>
        <authorList>
            <person name="Morita H."/>
            <person name="Toh H."/>
            <person name="Fukuda S."/>
            <person name="Horikawa H."/>
            <person name="Oshima K."/>
            <person name="Suzuki T."/>
            <person name="Murakami M."/>
            <person name="Hisamatsu S."/>
            <person name="Kato Y."/>
            <person name="Takizawa T."/>
            <person name="Fukuoka H."/>
            <person name="Yoshimura T."/>
            <person name="Itoh K."/>
            <person name="O'Sullivan D.J."/>
            <person name="McKay L.L."/>
            <person name="Ohno H."/>
            <person name="Kikuchi J."/>
            <person name="Masaoka T."/>
            <person name="Hattori M."/>
        </authorList>
    </citation>
    <scope>NUCLEOTIDE SEQUENCE [LARGE SCALE GENOMIC DNA]</scope>
    <source>
        <strain>NBRC 3956 / LMG 18251</strain>
    </source>
</reference>
<proteinExistence type="inferred from homology"/>
<feature type="chain" id="PRO_1000138893" description="Carbamoyl phosphate synthase large chain">
    <location>
        <begin position="1"/>
        <end position="1059"/>
    </location>
</feature>
<feature type="domain" description="ATP-grasp 1" evidence="1">
    <location>
        <begin position="133"/>
        <end position="327"/>
    </location>
</feature>
<feature type="domain" description="ATP-grasp 2" evidence="1">
    <location>
        <begin position="671"/>
        <end position="861"/>
    </location>
</feature>
<feature type="domain" description="MGS-like" evidence="1">
    <location>
        <begin position="930"/>
        <end position="1059"/>
    </location>
</feature>
<feature type="region of interest" description="Carboxyphosphate synthetic domain" evidence="1">
    <location>
        <begin position="1"/>
        <end position="401"/>
    </location>
</feature>
<feature type="region of interest" description="Oligomerization domain" evidence="1">
    <location>
        <begin position="402"/>
        <end position="546"/>
    </location>
</feature>
<feature type="region of interest" description="Carbamoyl phosphate synthetic domain" evidence="1">
    <location>
        <begin position="547"/>
        <end position="929"/>
    </location>
</feature>
<feature type="region of interest" description="Allosteric domain" evidence="1">
    <location>
        <begin position="930"/>
        <end position="1059"/>
    </location>
</feature>
<feature type="binding site" evidence="1">
    <location>
        <position position="129"/>
    </location>
    <ligand>
        <name>ATP</name>
        <dbReference type="ChEBI" id="CHEBI:30616"/>
        <label>1</label>
    </ligand>
</feature>
<feature type="binding site" evidence="1">
    <location>
        <position position="169"/>
    </location>
    <ligand>
        <name>ATP</name>
        <dbReference type="ChEBI" id="CHEBI:30616"/>
        <label>1</label>
    </ligand>
</feature>
<feature type="binding site" evidence="1">
    <location>
        <position position="175"/>
    </location>
    <ligand>
        <name>ATP</name>
        <dbReference type="ChEBI" id="CHEBI:30616"/>
        <label>1</label>
    </ligand>
</feature>
<feature type="binding site" evidence="1">
    <location>
        <position position="176"/>
    </location>
    <ligand>
        <name>ATP</name>
        <dbReference type="ChEBI" id="CHEBI:30616"/>
        <label>1</label>
    </ligand>
</feature>
<feature type="binding site" evidence="1">
    <location>
        <position position="208"/>
    </location>
    <ligand>
        <name>ATP</name>
        <dbReference type="ChEBI" id="CHEBI:30616"/>
        <label>1</label>
    </ligand>
</feature>
<feature type="binding site" evidence="1">
    <location>
        <position position="210"/>
    </location>
    <ligand>
        <name>ATP</name>
        <dbReference type="ChEBI" id="CHEBI:30616"/>
        <label>1</label>
    </ligand>
</feature>
<feature type="binding site" evidence="1">
    <location>
        <position position="215"/>
    </location>
    <ligand>
        <name>ATP</name>
        <dbReference type="ChEBI" id="CHEBI:30616"/>
        <label>1</label>
    </ligand>
</feature>
<feature type="binding site" evidence="1">
    <location>
        <position position="241"/>
    </location>
    <ligand>
        <name>ATP</name>
        <dbReference type="ChEBI" id="CHEBI:30616"/>
        <label>1</label>
    </ligand>
</feature>
<feature type="binding site" evidence="1">
    <location>
        <position position="242"/>
    </location>
    <ligand>
        <name>ATP</name>
        <dbReference type="ChEBI" id="CHEBI:30616"/>
        <label>1</label>
    </ligand>
</feature>
<feature type="binding site" evidence="1">
    <location>
        <position position="243"/>
    </location>
    <ligand>
        <name>ATP</name>
        <dbReference type="ChEBI" id="CHEBI:30616"/>
        <label>1</label>
    </ligand>
</feature>
<feature type="binding site" evidence="1">
    <location>
        <position position="284"/>
    </location>
    <ligand>
        <name>ATP</name>
        <dbReference type="ChEBI" id="CHEBI:30616"/>
        <label>1</label>
    </ligand>
</feature>
<feature type="binding site" evidence="1">
    <location>
        <position position="284"/>
    </location>
    <ligand>
        <name>Mg(2+)</name>
        <dbReference type="ChEBI" id="CHEBI:18420"/>
        <label>1</label>
    </ligand>
</feature>
<feature type="binding site" evidence="1">
    <location>
        <position position="284"/>
    </location>
    <ligand>
        <name>Mn(2+)</name>
        <dbReference type="ChEBI" id="CHEBI:29035"/>
        <label>1</label>
    </ligand>
</feature>
<feature type="binding site" evidence="1">
    <location>
        <position position="298"/>
    </location>
    <ligand>
        <name>ATP</name>
        <dbReference type="ChEBI" id="CHEBI:30616"/>
        <label>1</label>
    </ligand>
</feature>
<feature type="binding site" evidence="1">
    <location>
        <position position="298"/>
    </location>
    <ligand>
        <name>Mg(2+)</name>
        <dbReference type="ChEBI" id="CHEBI:18420"/>
        <label>1</label>
    </ligand>
</feature>
<feature type="binding site" evidence="1">
    <location>
        <position position="298"/>
    </location>
    <ligand>
        <name>Mg(2+)</name>
        <dbReference type="ChEBI" id="CHEBI:18420"/>
        <label>2</label>
    </ligand>
</feature>
<feature type="binding site" evidence="1">
    <location>
        <position position="298"/>
    </location>
    <ligand>
        <name>Mn(2+)</name>
        <dbReference type="ChEBI" id="CHEBI:29035"/>
        <label>1</label>
    </ligand>
</feature>
<feature type="binding site" evidence="1">
    <location>
        <position position="298"/>
    </location>
    <ligand>
        <name>Mn(2+)</name>
        <dbReference type="ChEBI" id="CHEBI:29035"/>
        <label>2</label>
    </ligand>
</feature>
<feature type="binding site" evidence="1">
    <location>
        <position position="300"/>
    </location>
    <ligand>
        <name>Mg(2+)</name>
        <dbReference type="ChEBI" id="CHEBI:18420"/>
        <label>2</label>
    </ligand>
</feature>
<feature type="binding site" evidence="1">
    <location>
        <position position="300"/>
    </location>
    <ligand>
        <name>Mn(2+)</name>
        <dbReference type="ChEBI" id="CHEBI:29035"/>
        <label>2</label>
    </ligand>
</feature>
<feature type="binding site" evidence="1">
    <location>
        <position position="707"/>
    </location>
    <ligand>
        <name>ATP</name>
        <dbReference type="ChEBI" id="CHEBI:30616"/>
        <label>2</label>
    </ligand>
</feature>
<feature type="binding site" evidence="1">
    <location>
        <position position="746"/>
    </location>
    <ligand>
        <name>ATP</name>
        <dbReference type="ChEBI" id="CHEBI:30616"/>
        <label>2</label>
    </ligand>
</feature>
<feature type="binding site" evidence="1">
    <location>
        <position position="748"/>
    </location>
    <ligand>
        <name>ATP</name>
        <dbReference type="ChEBI" id="CHEBI:30616"/>
        <label>2</label>
    </ligand>
</feature>
<feature type="binding site" evidence="1">
    <location>
        <position position="752"/>
    </location>
    <ligand>
        <name>ATP</name>
        <dbReference type="ChEBI" id="CHEBI:30616"/>
        <label>2</label>
    </ligand>
</feature>
<feature type="binding site" evidence="1">
    <location>
        <position position="777"/>
    </location>
    <ligand>
        <name>ATP</name>
        <dbReference type="ChEBI" id="CHEBI:30616"/>
        <label>2</label>
    </ligand>
</feature>
<feature type="binding site" evidence="1">
    <location>
        <position position="778"/>
    </location>
    <ligand>
        <name>ATP</name>
        <dbReference type="ChEBI" id="CHEBI:30616"/>
        <label>2</label>
    </ligand>
</feature>
<feature type="binding site" evidence="1">
    <location>
        <position position="779"/>
    </location>
    <ligand>
        <name>ATP</name>
        <dbReference type="ChEBI" id="CHEBI:30616"/>
        <label>2</label>
    </ligand>
</feature>
<feature type="binding site" evidence="1">
    <location>
        <position position="780"/>
    </location>
    <ligand>
        <name>ATP</name>
        <dbReference type="ChEBI" id="CHEBI:30616"/>
        <label>2</label>
    </ligand>
</feature>
<feature type="binding site" evidence="1">
    <location>
        <position position="820"/>
    </location>
    <ligand>
        <name>ATP</name>
        <dbReference type="ChEBI" id="CHEBI:30616"/>
        <label>2</label>
    </ligand>
</feature>
<feature type="binding site" evidence="1">
    <location>
        <position position="820"/>
    </location>
    <ligand>
        <name>Mg(2+)</name>
        <dbReference type="ChEBI" id="CHEBI:18420"/>
        <label>3</label>
    </ligand>
</feature>
<feature type="binding site" evidence="1">
    <location>
        <position position="820"/>
    </location>
    <ligand>
        <name>Mn(2+)</name>
        <dbReference type="ChEBI" id="CHEBI:29035"/>
        <label>3</label>
    </ligand>
</feature>
<feature type="binding site" evidence="1">
    <location>
        <position position="832"/>
    </location>
    <ligand>
        <name>ATP</name>
        <dbReference type="ChEBI" id="CHEBI:30616"/>
        <label>2</label>
    </ligand>
</feature>
<feature type="binding site" evidence="1">
    <location>
        <position position="832"/>
    </location>
    <ligand>
        <name>Mg(2+)</name>
        <dbReference type="ChEBI" id="CHEBI:18420"/>
        <label>3</label>
    </ligand>
</feature>
<feature type="binding site" evidence="1">
    <location>
        <position position="832"/>
    </location>
    <ligand>
        <name>Mg(2+)</name>
        <dbReference type="ChEBI" id="CHEBI:18420"/>
        <label>4</label>
    </ligand>
</feature>
<feature type="binding site" evidence="1">
    <location>
        <position position="832"/>
    </location>
    <ligand>
        <name>Mn(2+)</name>
        <dbReference type="ChEBI" id="CHEBI:29035"/>
        <label>3</label>
    </ligand>
</feature>
<feature type="binding site" evidence="1">
    <location>
        <position position="832"/>
    </location>
    <ligand>
        <name>Mn(2+)</name>
        <dbReference type="ChEBI" id="CHEBI:29035"/>
        <label>4</label>
    </ligand>
</feature>
<feature type="binding site" evidence="1">
    <location>
        <position position="834"/>
    </location>
    <ligand>
        <name>Mg(2+)</name>
        <dbReference type="ChEBI" id="CHEBI:18420"/>
        <label>4</label>
    </ligand>
</feature>
<feature type="binding site" evidence="1">
    <location>
        <position position="834"/>
    </location>
    <ligand>
        <name>Mn(2+)</name>
        <dbReference type="ChEBI" id="CHEBI:29035"/>
        <label>4</label>
    </ligand>
</feature>
<sequence length="1059" mass="114597">MPKRTDIHKIMVIGSGPIIIGQAAEFDYSGTQACLALKEEGYETVLVNSNPATIMTDKGIADHVYIEPLTVAALTRILRQEAPDVLLPTLGGQIGLNLAVALSKTGILDELGIELLGTKLASIDQAEDREKFKELMQELGEPVPASLTVSTVEQALAFAKTVGYPVIVRPAFTMGGTGGGLANNEAELAEIAKNGLELSPATQCLIEKSIAGYKEIEFEVMRDAADNTMVVCCMENFDPVGIHTGDSIVFAPSQTLADREYQRLRDCALKLISALKIEGGCNVQLALDPNSYDYNVIEVNPRVSRSSALASKATGYPIAKLAAKIAVGLTLDEIKNPVTKTTYAEFEPALDYVVVKIPRWPFDKFTKADRRLGSQMKATGEVMAIGRTAEEALLKAVASLEIDQKDLLSKEAAAASDRQLEDKLVHAQDDRLFYIAEAFRRGYSLADLHELTRINHYFLDIVAGLVEEEGRIKAAGLDKEVIYEAKRDGFADTTLATLLGQNPAAIRAFRKANGIVPVYKMVDTCAAEFDSATPYFYSTYETENESRRSAKPSVLVIGSGPIRIGQGVEFDYATVHCVRALQKLGYEAIVINSNPETVSTDFSVSDKLYFEPLTLENVLNVTDLEQPVGAIVQFGGQTAINLASGLEANGVKILGTTVADLDAAEDRELFDQVIKDLNLRQPIGMTATTRQGVLDAAKEIGYPVLVRPSYVLGGKAMEIVYGQAELEDYLNQNADVTGSHPILVDAYLEGAECEVDAICDGERVLLPGIMEHIEHAGVHSGDSMAVYPPQSLSGAVKVQIEEATKKLAVALKCVGIMNIQFIIHDGQAYVLEVNPRASRTVPFLSKVTGIEMAQLATKVILGHSLAEQGYRSGLAPESQMIHVKAPVFSFSKLGDVDSYLGPEMKSTGEVMGSDTTYEKALYKAFAGAGMEVPDNGAVLLTIEDNDKAQILPLAKRFLAIGYRILATSGTAAFLEENGLHPTVVAKLHEQGQPAILDVIKDKHVDLVINTMGHDDEKNSDGFIIRQTAIEHHVPLLTALDTVNALLRSLEMTSFKTTEL</sequence>
<organism>
    <name type="scientific">Limosilactobacillus fermentum (strain NBRC 3956 / LMG 18251)</name>
    <name type="common">Lactobacillus fermentum</name>
    <dbReference type="NCBI Taxonomy" id="334390"/>
    <lineage>
        <taxon>Bacteria</taxon>
        <taxon>Bacillati</taxon>
        <taxon>Bacillota</taxon>
        <taxon>Bacilli</taxon>
        <taxon>Lactobacillales</taxon>
        <taxon>Lactobacillaceae</taxon>
        <taxon>Limosilactobacillus</taxon>
    </lineage>
</organism>
<comment type="function">
    <text evidence="1">Large subunit of the glutamine-dependent carbamoyl phosphate synthetase (CPSase). CPSase catalyzes the formation of carbamoyl phosphate from the ammonia moiety of glutamine, carbonate, and phosphate donated by ATP, constituting the first step of 2 biosynthetic pathways, one leading to arginine and/or urea and the other to pyrimidine nucleotides. The large subunit (synthetase) binds the substrates ammonia (free or transferred from glutamine from the small subunit), hydrogencarbonate and ATP and carries out an ATP-coupled ligase reaction, activating hydrogencarbonate by forming carboxy phosphate which reacts with ammonia to form carbamoyl phosphate.</text>
</comment>
<comment type="catalytic activity">
    <reaction evidence="1">
        <text>hydrogencarbonate + L-glutamine + 2 ATP + H2O = carbamoyl phosphate + L-glutamate + 2 ADP + phosphate + 2 H(+)</text>
        <dbReference type="Rhea" id="RHEA:18633"/>
        <dbReference type="ChEBI" id="CHEBI:15377"/>
        <dbReference type="ChEBI" id="CHEBI:15378"/>
        <dbReference type="ChEBI" id="CHEBI:17544"/>
        <dbReference type="ChEBI" id="CHEBI:29985"/>
        <dbReference type="ChEBI" id="CHEBI:30616"/>
        <dbReference type="ChEBI" id="CHEBI:43474"/>
        <dbReference type="ChEBI" id="CHEBI:58228"/>
        <dbReference type="ChEBI" id="CHEBI:58359"/>
        <dbReference type="ChEBI" id="CHEBI:456216"/>
        <dbReference type="EC" id="6.3.5.5"/>
    </reaction>
</comment>
<comment type="catalytic activity">
    <molecule>Carbamoyl phosphate synthase large chain</molecule>
    <reaction evidence="1">
        <text>hydrogencarbonate + NH4(+) + 2 ATP = carbamoyl phosphate + 2 ADP + phosphate + 2 H(+)</text>
        <dbReference type="Rhea" id="RHEA:18029"/>
        <dbReference type="ChEBI" id="CHEBI:15378"/>
        <dbReference type="ChEBI" id="CHEBI:17544"/>
        <dbReference type="ChEBI" id="CHEBI:28938"/>
        <dbReference type="ChEBI" id="CHEBI:30616"/>
        <dbReference type="ChEBI" id="CHEBI:43474"/>
        <dbReference type="ChEBI" id="CHEBI:58228"/>
        <dbReference type="ChEBI" id="CHEBI:456216"/>
        <dbReference type="EC" id="6.3.4.16"/>
    </reaction>
</comment>
<comment type="cofactor">
    <cofactor evidence="1">
        <name>Mg(2+)</name>
        <dbReference type="ChEBI" id="CHEBI:18420"/>
    </cofactor>
    <cofactor evidence="1">
        <name>Mn(2+)</name>
        <dbReference type="ChEBI" id="CHEBI:29035"/>
    </cofactor>
    <text evidence="1">Binds 4 Mg(2+) or Mn(2+) ions per subunit.</text>
</comment>
<comment type="pathway">
    <text evidence="1">Amino-acid biosynthesis; L-arginine biosynthesis; carbamoyl phosphate from bicarbonate: step 1/1.</text>
</comment>
<comment type="pathway">
    <text evidence="1">Pyrimidine metabolism; UMP biosynthesis via de novo pathway; (S)-dihydroorotate from bicarbonate: step 1/3.</text>
</comment>
<comment type="subunit">
    <text evidence="1">Composed of two chains; the small (or glutamine) chain promotes the hydrolysis of glutamine to ammonia, which is used by the large (or ammonia) chain to synthesize carbamoyl phosphate. Tetramer of heterodimers (alpha,beta)4.</text>
</comment>
<comment type="domain">
    <text evidence="1">The large subunit is composed of 2 ATP-grasp domains that are involved in binding the 2 ATP molecules needed for carbamoyl phosphate synthesis. The N-terminal ATP-grasp domain (referred to as the carboxyphosphate synthetic component) catalyzes the ATP-dependent phosphorylation of hydrogencarbonate to carboxyphosphate and the subsequent nucleophilic attack by ammonia to form a carbamate intermediate. The C-terminal ATP-grasp domain (referred to as the carbamoyl phosphate synthetic component) then catalyzes the phosphorylation of carbamate with the second ATP to form the end product carbamoyl phosphate. The reactive and unstable enzyme intermediates are sequentially channeled from one active site to the next through the interior of the protein over a distance of at least 96 A.</text>
</comment>
<comment type="similarity">
    <text evidence="1">Belongs to the CarB family.</text>
</comment>
<dbReference type="EC" id="6.3.4.16" evidence="1"/>
<dbReference type="EC" id="6.3.5.5" evidence="1"/>
<dbReference type="EMBL" id="AP008937">
    <property type="protein sequence ID" value="BAG27538.1"/>
    <property type="molecule type" value="Genomic_DNA"/>
</dbReference>
<dbReference type="RefSeq" id="WP_012391419.1">
    <property type="nucleotide sequence ID" value="NC_010610.1"/>
</dbReference>
<dbReference type="SMR" id="B2GD06"/>
<dbReference type="KEGG" id="lfe:LAF_1202"/>
<dbReference type="PATRIC" id="fig|334390.5.peg.1326"/>
<dbReference type="eggNOG" id="COG0458">
    <property type="taxonomic scope" value="Bacteria"/>
</dbReference>
<dbReference type="HOGENOM" id="CLU_000513_1_2_9"/>
<dbReference type="UniPathway" id="UPA00068">
    <property type="reaction ID" value="UER00171"/>
</dbReference>
<dbReference type="UniPathway" id="UPA00070">
    <property type="reaction ID" value="UER00115"/>
</dbReference>
<dbReference type="Proteomes" id="UP000001697">
    <property type="component" value="Chromosome"/>
</dbReference>
<dbReference type="GO" id="GO:0005737">
    <property type="term" value="C:cytoplasm"/>
    <property type="evidence" value="ECO:0007669"/>
    <property type="project" value="TreeGrafter"/>
</dbReference>
<dbReference type="GO" id="GO:0005524">
    <property type="term" value="F:ATP binding"/>
    <property type="evidence" value="ECO:0007669"/>
    <property type="project" value="UniProtKB-UniRule"/>
</dbReference>
<dbReference type="GO" id="GO:0004087">
    <property type="term" value="F:carbamoyl-phosphate synthase (ammonia) activity"/>
    <property type="evidence" value="ECO:0007669"/>
    <property type="project" value="RHEA"/>
</dbReference>
<dbReference type="GO" id="GO:0004088">
    <property type="term" value="F:carbamoyl-phosphate synthase (glutamine-hydrolyzing) activity"/>
    <property type="evidence" value="ECO:0007669"/>
    <property type="project" value="UniProtKB-UniRule"/>
</dbReference>
<dbReference type="GO" id="GO:0046872">
    <property type="term" value="F:metal ion binding"/>
    <property type="evidence" value="ECO:0007669"/>
    <property type="project" value="UniProtKB-KW"/>
</dbReference>
<dbReference type="GO" id="GO:0044205">
    <property type="term" value="P:'de novo' UMP biosynthetic process"/>
    <property type="evidence" value="ECO:0007669"/>
    <property type="project" value="UniProtKB-UniRule"/>
</dbReference>
<dbReference type="GO" id="GO:0006541">
    <property type="term" value="P:glutamine metabolic process"/>
    <property type="evidence" value="ECO:0007669"/>
    <property type="project" value="TreeGrafter"/>
</dbReference>
<dbReference type="GO" id="GO:0006526">
    <property type="term" value="P:L-arginine biosynthetic process"/>
    <property type="evidence" value="ECO:0007669"/>
    <property type="project" value="UniProtKB-UniRule"/>
</dbReference>
<dbReference type="CDD" id="cd01424">
    <property type="entry name" value="MGS_CPS_II"/>
    <property type="match status" value="1"/>
</dbReference>
<dbReference type="FunFam" id="1.10.1030.10:FF:000002">
    <property type="entry name" value="Carbamoyl-phosphate synthase large chain"/>
    <property type="match status" value="1"/>
</dbReference>
<dbReference type="FunFam" id="3.30.1490.20:FF:000001">
    <property type="entry name" value="Carbamoyl-phosphate synthase large chain"/>
    <property type="match status" value="1"/>
</dbReference>
<dbReference type="FunFam" id="3.30.470.20:FF:000001">
    <property type="entry name" value="Carbamoyl-phosphate synthase large chain"/>
    <property type="match status" value="1"/>
</dbReference>
<dbReference type="FunFam" id="3.30.470.20:FF:000026">
    <property type="entry name" value="Carbamoyl-phosphate synthase large chain"/>
    <property type="match status" value="1"/>
</dbReference>
<dbReference type="FunFam" id="3.40.50.20:FF:000001">
    <property type="entry name" value="Carbamoyl-phosphate synthase large chain"/>
    <property type="match status" value="1"/>
</dbReference>
<dbReference type="FunFam" id="3.40.50.20:FF:000002">
    <property type="entry name" value="Carbamoyl-phosphate synthase large chain"/>
    <property type="match status" value="1"/>
</dbReference>
<dbReference type="Gene3D" id="3.40.50.20">
    <property type="match status" value="2"/>
</dbReference>
<dbReference type="Gene3D" id="3.30.1490.20">
    <property type="entry name" value="ATP-grasp fold, A domain"/>
    <property type="match status" value="1"/>
</dbReference>
<dbReference type="Gene3D" id="3.30.470.20">
    <property type="entry name" value="ATP-grasp fold, B domain"/>
    <property type="match status" value="2"/>
</dbReference>
<dbReference type="Gene3D" id="1.10.1030.10">
    <property type="entry name" value="Carbamoyl-phosphate synthetase, large subunit oligomerisation domain"/>
    <property type="match status" value="1"/>
</dbReference>
<dbReference type="Gene3D" id="3.40.50.1380">
    <property type="entry name" value="Methylglyoxal synthase-like domain"/>
    <property type="match status" value="1"/>
</dbReference>
<dbReference type="HAMAP" id="MF_01210_A">
    <property type="entry name" value="CPSase_L_chain_A"/>
    <property type="match status" value="1"/>
</dbReference>
<dbReference type="HAMAP" id="MF_01210_B">
    <property type="entry name" value="CPSase_L_chain_B"/>
    <property type="match status" value="1"/>
</dbReference>
<dbReference type="InterPro" id="IPR011761">
    <property type="entry name" value="ATP-grasp"/>
</dbReference>
<dbReference type="InterPro" id="IPR013815">
    <property type="entry name" value="ATP_grasp_subdomain_1"/>
</dbReference>
<dbReference type="InterPro" id="IPR006275">
    <property type="entry name" value="CarbamoylP_synth_lsu"/>
</dbReference>
<dbReference type="InterPro" id="IPR005480">
    <property type="entry name" value="CarbamoylP_synth_lsu_oligo"/>
</dbReference>
<dbReference type="InterPro" id="IPR036897">
    <property type="entry name" value="CarbamoylP_synth_lsu_oligo_sf"/>
</dbReference>
<dbReference type="InterPro" id="IPR005479">
    <property type="entry name" value="CbamoylP_synth_lsu-like_ATP-bd"/>
</dbReference>
<dbReference type="InterPro" id="IPR005483">
    <property type="entry name" value="CbamoylP_synth_lsu_CPSase_dom"/>
</dbReference>
<dbReference type="InterPro" id="IPR011607">
    <property type="entry name" value="MGS-like_dom"/>
</dbReference>
<dbReference type="InterPro" id="IPR036914">
    <property type="entry name" value="MGS-like_dom_sf"/>
</dbReference>
<dbReference type="InterPro" id="IPR033937">
    <property type="entry name" value="MGS_CPS_CarB"/>
</dbReference>
<dbReference type="InterPro" id="IPR016185">
    <property type="entry name" value="PreATP-grasp_dom_sf"/>
</dbReference>
<dbReference type="NCBIfam" id="TIGR01369">
    <property type="entry name" value="CPSaseII_lrg"/>
    <property type="match status" value="1"/>
</dbReference>
<dbReference type="NCBIfam" id="NF003671">
    <property type="entry name" value="PRK05294.1"/>
    <property type="match status" value="1"/>
</dbReference>
<dbReference type="NCBIfam" id="NF009455">
    <property type="entry name" value="PRK12815.1"/>
    <property type="match status" value="1"/>
</dbReference>
<dbReference type="PANTHER" id="PTHR11405:SF53">
    <property type="entry name" value="CARBAMOYL-PHOSPHATE SYNTHASE [AMMONIA], MITOCHONDRIAL"/>
    <property type="match status" value="1"/>
</dbReference>
<dbReference type="PANTHER" id="PTHR11405">
    <property type="entry name" value="CARBAMOYLTRANSFERASE FAMILY MEMBER"/>
    <property type="match status" value="1"/>
</dbReference>
<dbReference type="Pfam" id="PF02786">
    <property type="entry name" value="CPSase_L_D2"/>
    <property type="match status" value="2"/>
</dbReference>
<dbReference type="Pfam" id="PF02787">
    <property type="entry name" value="CPSase_L_D3"/>
    <property type="match status" value="1"/>
</dbReference>
<dbReference type="Pfam" id="PF02142">
    <property type="entry name" value="MGS"/>
    <property type="match status" value="1"/>
</dbReference>
<dbReference type="PRINTS" id="PR00098">
    <property type="entry name" value="CPSASE"/>
</dbReference>
<dbReference type="SMART" id="SM01096">
    <property type="entry name" value="CPSase_L_D3"/>
    <property type="match status" value="1"/>
</dbReference>
<dbReference type="SMART" id="SM00851">
    <property type="entry name" value="MGS"/>
    <property type="match status" value="1"/>
</dbReference>
<dbReference type="SUPFAM" id="SSF48108">
    <property type="entry name" value="Carbamoyl phosphate synthetase, large subunit connection domain"/>
    <property type="match status" value="1"/>
</dbReference>
<dbReference type="SUPFAM" id="SSF56059">
    <property type="entry name" value="Glutathione synthetase ATP-binding domain-like"/>
    <property type="match status" value="2"/>
</dbReference>
<dbReference type="SUPFAM" id="SSF52335">
    <property type="entry name" value="Methylglyoxal synthase-like"/>
    <property type="match status" value="1"/>
</dbReference>
<dbReference type="SUPFAM" id="SSF52440">
    <property type="entry name" value="PreATP-grasp domain"/>
    <property type="match status" value="2"/>
</dbReference>
<dbReference type="PROSITE" id="PS50975">
    <property type="entry name" value="ATP_GRASP"/>
    <property type="match status" value="2"/>
</dbReference>
<dbReference type="PROSITE" id="PS00866">
    <property type="entry name" value="CPSASE_1"/>
    <property type="match status" value="2"/>
</dbReference>
<dbReference type="PROSITE" id="PS00867">
    <property type="entry name" value="CPSASE_2"/>
    <property type="match status" value="2"/>
</dbReference>
<dbReference type="PROSITE" id="PS51855">
    <property type="entry name" value="MGS"/>
    <property type="match status" value="1"/>
</dbReference>
<protein>
    <recommendedName>
        <fullName evidence="1">Carbamoyl phosphate synthase large chain</fullName>
        <ecNumber evidence="1">6.3.4.16</ecNumber>
        <ecNumber evidence="1">6.3.5.5</ecNumber>
    </recommendedName>
    <alternativeName>
        <fullName evidence="1">Carbamoyl phosphate synthetase ammonia chain</fullName>
    </alternativeName>
</protein>
<keyword id="KW-0028">Amino-acid biosynthesis</keyword>
<keyword id="KW-0055">Arginine biosynthesis</keyword>
<keyword id="KW-0067">ATP-binding</keyword>
<keyword id="KW-0436">Ligase</keyword>
<keyword id="KW-0460">Magnesium</keyword>
<keyword id="KW-0464">Manganese</keyword>
<keyword id="KW-0479">Metal-binding</keyword>
<keyword id="KW-0547">Nucleotide-binding</keyword>
<keyword id="KW-0665">Pyrimidine biosynthesis</keyword>
<keyword id="KW-1185">Reference proteome</keyword>
<keyword id="KW-0677">Repeat</keyword>
<name>CARB_LIMF3</name>
<gene>
    <name evidence="1" type="primary">carB</name>
    <name type="ordered locus">LAF_1202</name>
</gene>
<evidence type="ECO:0000255" key="1">
    <source>
        <dbReference type="HAMAP-Rule" id="MF_01210"/>
    </source>
</evidence>
<accession>B2GD06</accession>